<protein>
    <recommendedName>
        <fullName>Phospholipid-transporting ATPase ID</fullName>
        <ecNumber evidence="2">7.6.2.1</ecNumber>
    </recommendedName>
    <alternativeName>
        <fullName>ATPase class I type 8B member 2</fullName>
    </alternativeName>
    <alternativeName>
        <fullName>P4-ATPase flippase complex alpha subunit ATP8B2</fullName>
    </alternativeName>
</protein>
<sequence length="1209" mass="136968">MTVPKEIPEKWARAGAPPSWSQKKPSWGTEEERRARANDREYNEKFQYASNCIKTSKYNIVTFLPVNLFEQFQEVANTYFLFLLILQLIPQISSLSWFTTIVPLVLVLTITAVKDATDDYFRHKSDNQVNNRHSQVLINGVLQQEQWMNVCVGDIIKLENNQFVAADLLLLSSSEPHGLCYIETAELDGETNMKVRQAIPVTSELGDVSQLARFDGEVICEPPNNKLDKFSGTLYWKENKFPLSNQNMLLRGCVLRNTEWCFGLVIFAGPDTKLMQNSGRTKFKRTSIDRLMNTLVLWIFGFLVCMGVILAIGNAIWEHEVGTRFQVYLPWDEAVDSAFFSGFLSFWSYIIILNTVVPISLYVSVEVIRLGHSYFINWDKKMFCMKKRTPAEARTTTLNEELGQVEYIFSDKTGTLTQNIMVFNKCSINGHSYGDVFDVLGHKAELGERPEPVDFSFNPLADKKFLFWDSSLLEAVKMGDPHTHEFFRLLSLCHTVMSEEKNEGELYYKAQSPDEGALVTAARNFGFVFRSRTPKTITVHELGTAITYQLLAILDFNNIRKRMSVIVRNPEGKIRLYCKGADTILLDRLHPPTQELLSSTTDHLNEYAGDGLRTLVLAYKDLDEEYYEEWARRRLQASLAQDSREDRLASIYEEVESDMMLLGATAIEDKLQQGVPETIALLTLANIKIWVLTGDKQETAVNIGYSCKMLTDDMTEVFVVTGHTVLEVREELRKARKKMVDSSHAVGNGFTYQGNLSSSKLTSVLEAVAGEYALVINGHSLAHALEADMELEFLETACACKAVICCRVTPLQKAQVVELVKKYKKAVTLAIGDGANDVSMIKTAHIGVGISGQEGIQAVLASDYSFSQFKFLQRLLLVHGRWSYLRMCKFLCYFFYKNFAFTMVHFWFGFFCGFSAQTVYDQYFITLYNIVYTSLPVLAMGVFDQDVPEQRSMEYPKLYEPGQLNLLFNKREFFICIAQGIYTSVLMFFIPYGVFAEATRDDGTQLADYQSFAVTVATSLVIVVSVQIGLDTGYWTAINHFFIWGSLAVYFAILFAMHSNGLFDMFPNQFRFVGNAQNTLAQPTVWLTIALTTAVCIMPVVAFRFLRLSLKPDLSDTVRYTQLVRKKQKAQHRCMRRVGRTGSRRSGYAFSHQEGFGELIMSGKNMRLSSLALSSFSTRSSSSWIESLRRKKSDSANSPSGGAEKPLKG</sequence>
<comment type="function">
    <text evidence="2">Catalytic component of P4-ATPase flippase complex, which catalyzes the hydrolysis of ATP coupled to the transport of phosphatidylcholine (PC) from the outer to the inner leaflet of the plasma membrane. May contribute to the maintenance of membrane lipid asymmetry.</text>
</comment>
<comment type="catalytic activity">
    <reaction evidence="2">
        <text>ATP + H2O + phospholipidSide 1 = ADP + phosphate + phospholipidSide 2.</text>
        <dbReference type="EC" id="7.6.2.1"/>
    </reaction>
</comment>
<comment type="catalytic activity">
    <reaction evidence="2">
        <text>a 1,2-diacyl-sn-glycero-3-phosphocholine(out) + ATP + H2O = a 1,2-diacyl-sn-glycero-3-phosphocholine(in) + ADP + phosphate + H(+)</text>
        <dbReference type="Rhea" id="RHEA:38583"/>
        <dbReference type="ChEBI" id="CHEBI:15377"/>
        <dbReference type="ChEBI" id="CHEBI:15378"/>
        <dbReference type="ChEBI" id="CHEBI:30616"/>
        <dbReference type="ChEBI" id="CHEBI:43474"/>
        <dbReference type="ChEBI" id="CHEBI:57643"/>
        <dbReference type="ChEBI" id="CHEBI:456216"/>
    </reaction>
    <physiologicalReaction direction="left-to-right" evidence="2">
        <dbReference type="Rhea" id="RHEA:38584"/>
    </physiologicalReaction>
</comment>
<comment type="cofactor">
    <cofactor evidence="5">
        <name>Mg(2+)</name>
        <dbReference type="ChEBI" id="CHEBI:18420"/>
    </cofactor>
</comment>
<comment type="subunit">
    <text evidence="2 8">Component of a P4-ATPase flippase complex which consists of a catalytic alpha subunit ATP8B2 and an accessory beta subunit TMEM30A or TMEM30B.</text>
</comment>
<comment type="subcellular location">
    <subcellularLocation>
        <location evidence="2">Cell membrane</location>
        <topology evidence="6">Multi-pass membrane protein</topology>
    </subcellularLocation>
    <subcellularLocation>
        <location evidence="2">Endoplasmic reticulum membrane</location>
        <topology evidence="6">Multi-pass membrane protein</topology>
    </subcellularLocation>
    <text evidence="2">Efficient exit from the endoplasmic reticulum requires the presence of TMEM30A or TMEM30B.</text>
</comment>
<comment type="tissue specificity">
    <text evidence="8">Expressed in brain and testes (at protein level).</text>
</comment>
<comment type="similarity">
    <text evidence="10">Belongs to the cation transport ATPase (P-type) (TC 3.A.3) family. Type IV subfamily.</text>
</comment>
<feature type="chain" id="PRO_0000046366" description="Phospholipid-transporting ATPase ID">
    <location>
        <begin position="1"/>
        <end position="1209"/>
    </location>
</feature>
<feature type="topological domain" description="Cytoplasmic" evidence="6">
    <location>
        <begin position="1"/>
        <end position="68"/>
    </location>
</feature>
<feature type="transmembrane region" description="Helical" evidence="6">
    <location>
        <begin position="69"/>
        <end position="89"/>
    </location>
</feature>
<feature type="topological domain" description="Exoplasmic loop" evidence="6">
    <location>
        <begin position="90"/>
        <end position="91"/>
    </location>
</feature>
<feature type="transmembrane region" description="Helical" evidence="6">
    <location>
        <begin position="92"/>
        <end position="112"/>
    </location>
</feature>
<feature type="topological domain" description="Cytoplasmic" evidence="6">
    <location>
        <begin position="113"/>
        <end position="295"/>
    </location>
</feature>
<feature type="transmembrane region" description="Helical" evidence="6">
    <location>
        <begin position="296"/>
        <end position="316"/>
    </location>
</feature>
<feature type="topological domain" description="Exoplasmic loop" evidence="6">
    <location>
        <begin position="317"/>
        <end position="338"/>
    </location>
</feature>
<feature type="transmembrane region" description="Helical" evidence="6">
    <location>
        <begin position="339"/>
        <end position="359"/>
    </location>
</feature>
<feature type="topological domain" description="Cytoplasmic" evidence="6">
    <location>
        <begin position="360"/>
        <end position="898"/>
    </location>
</feature>
<feature type="transmembrane region" description="Helical" evidence="6">
    <location>
        <begin position="899"/>
        <end position="919"/>
    </location>
</feature>
<feature type="topological domain" description="Exoplasmic loop" evidence="6">
    <location>
        <begin position="920"/>
        <end position="922"/>
    </location>
</feature>
<feature type="transmembrane region" description="Helical" evidence="6">
    <location>
        <begin position="923"/>
        <end position="943"/>
    </location>
</feature>
<feature type="topological domain" description="Cytoplasmic" evidence="6">
    <location>
        <begin position="944"/>
        <end position="972"/>
    </location>
</feature>
<feature type="transmembrane region" description="Helical" evidence="6">
    <location>
        <begin position="973"/>
        <end position="993"/>
    </location>
</feature>
<feature type="topological domain" description="Exoplasmic loop" evidence="6">
    <location>
        <begin position="994"/>
        <end position="1011"/>
    </location>
</feature>
<feature type="transmembrane region" description="Helical" evidence="6">
    <location>
        <begin position="1012"/>
        <end position="1032"/>
    </location>
</feature>
<feature type="topological domain" description="Cytoplasmic" evidence="6">
    <location>
        <begin position="1033"/>
        <end position="1036"/>
    </location>
</feature>
<feature type="transmembrane region" description="Helical" evidence="6">
    <location>
        <begin position="1037"/>
        <end position="1057"/>
    </location>
</feature>
<feature type="topological domain" description="Exoplasmic loop" evidence="6">
    <location>
        <begin position="1058"/>
        <end position="1082"/>
    </location>
</feature>
<feature type="transmembrane region" description="Helical" evidence="6">
    <location>
        <begin position="1083"/>
        <end position="1103"/>
    </location>
</feature>
<feature type="topological domain" description="Cytoplasmic" evidence="6">
    <location>
        <begin position="1104"/>
        <end position="1209"/>
    </location>
</feature>
<feature type="region of interest" description="Disordered" evidence="7">
    <location>
        <begin position="12"/>
        <end position="36"/>
    </location>
</feature>
<feature type="region of interest" description="Disordered" evidence="7">
    <location>
        <begin position="1179"/>
        <end position="1209"/>
    </location>
</feature>
<feature type="active site" description="4-aspartylphosphate intermediate" evidence="4">
    <location>
        <position position="411"/>
    </location>
</feature>
<feature type="binding site" evidence="5">
    <location>
        <position position="411"/>
    </location>
    <ligand>
        <name>ATP</name>
        <dbReference type="ChEBI" id="CHEBI:30616"/>
    </ligand>
</feature>
<feature type="binding site" evidence="5">
    <location>
        <position position="411"/>
    </location>
    <ligand>
        <name>Mg(2+)</name>
        <dbReference type="ChEBI" id="CHEBI:18420"/>
    </ligand>
</feature>
<feature type="binding site" evidence="5">
    <location>
        <position position="412"/>
    </location>
    <ligand>
        <name>ATP</name>
        <dbReference type="ChEBI" id="CHEBI:30616"/>
    </ligand>
</feature>
<feature type="binding site" evidence="5">
    <location>
        <position position="413"/>
    </location>
    <ligand>
        <name>ATP</name>
        <dbReference type="ChEBI" id="CHEBI:30616"/>
    </ligand>
</feature>
<feature type="binding site" evidence="5">
    <location>
        <position position="413"/>
    </location>
    <ligand>
        <name>Mg(2+)</name>
        <dbReference type="ChEBI" id="CHEBI:18420"/>
    </ligand>
</feature>
<feature type="binding site" evidence="1">
    <location>
        <position position="515"/>
    </location>
    <ligand>
        <name>ATP</name>
        <dbReference type="ChEBI" id="CHEBI:30616"/>
    </ligand>
</feature>
<feature type="binding site" evidence="5">
    <location>
        <position position="556"/>
    </location>
    <ligand>
        <name>ATP</name>
        <dbReference type="ChEBI" id="CHEBI:30616"/>
    </ligand>
</feature>
<feature type="binding site" evidence="1">
    <location>
        <position position="579"/>
    </location>
    <ligand>
        <name>ATP</name>
        <dbReference type="ChEBI" id="CHEBI:30616"/>
    </ligand>
</feature>
<feature type="binding site" evidence="1">
    <location>
        <position position="613"/>
    </location>
    <ligand>
        <name>ATP</name>
        <dbReference type="ChEBI" id="CHEBI:30616"/>
    </ligand>
</feature>
<feature type="binding site" evidence="1">
    <location>
        <position position="693"/>
    </location>
    <ligand>
        <name>ATP</name>
        <dbReference type="ChEBI" id="CHEBI:30616"/>
    </ligand>
</feature>
<feature type="binding site" evidence="1">
    <location>
        <position position="694"/>
    </location>
    <ligand>
        <name>ATP</name>
        <dbReference type="ChEBI" id="CHEBI:30616"/>
    </ligand>
</feature>
<feature type="binding site" evidence="1">
    <location>
        <position position="695"/>
    </location>
    <ligand>
        <name>ATP</name>
        <dbReference type="ChEBI" id="CHEBI:30616"/>
    </ligand>
</feature>
<feature type="binding site" evidence="1">
    <location>
        <position position="807"/>
    </location>
    <ligand>
        <name>ATP</name>
        <dbReference type="ChEBI" id="CHEBI:30616"/>
    </ligand>
</feature>
<feature type="binding site" evidence="1">
    <location>
        <position position="813"/>
    </location>
    <ligand>
        <name>ATP</name>
        <dbReference type="ChEBI" id="CHEBI:30616"/>
    </ligand>
</feature>
<feature type="binding site" evidence="3">
    <location>
        <position position="833"/>
    </location>
    <ligand>
        <name>Mg(2+)</name>
        <dbReference type="ChEBI" id="CHEBI:18420"/>
    </ligand>
</feature>
<feature type="binding site" evidence="5">
    <location>
        <position position="836"/>
    </location>
    <ligand>
        <name>ATP</name>
        <dbReference type="ChEBI" id="CHEBI:30616"/>
    </ligand>
</feature>
<feature type="binding site" evidence="5">
    <location>
        <position position="837"/>
    </location>
    <ligand>
        <name>ATP</name>
        <dbReference type="ChEBI" id="CHEBI:30616"/>
    </ligand>
</feature>
<feature type="binding site" evidence="3">
    <location>
        <position position="837"/>
    </location>
    <ligand>
        <name>Mg(2+)</name>
        <dbReference type="ChEBI" id="CHEBI:18420"/>
    </ligand>
</feature>
<feature type="modified residue" description="Phosphoserine" evidence="2">
    <location>
        <position position="1175"/>
    </location>
</feature>
<feature type="sequence conflict" description="In Ref. 2; AAF09444." evidence="10" ref="2">
    <original>F</original>
    <variation>L</variation>
    <location>
        <position position="989"/>
    </location>
</feature>
<gene>
    <name evidence="9 11" type="primary">Atp8b2</name>
</gene>
<proteinExistence type="evidence at protein level"/>
<reference key="1">
    <citation type="journal article" date="2009" name="PLoS Biol.">
        <title>Lineage-specific biology revealed by a finished genome assembly of the mouse.</title>
        <authorList>
            <person name="Church D.M."/>
            <person name="Goodstadt L."/>
            <person name="Hillier L.W."/>
            <person name="Zody M.C."/>
            <person name="Goldstein S."/>
            <person name="She X."/>
            <person name="Bult C.J."/>
            <person name="Agarwala R."/>
            <person name="Cherry J.L."/>
            <person name="DiCuccio M."/>
            <person name="Hlavina W."/>
            <person name="Kapustin Y."/>
            <person name="Meric P."/>
            <person name="Maglott D."/>
            <person name="Birtle Z."/>
            <person name="Marques A.C."/>
            <person name="Graves T."/>
            <person name="Zhou S."/>
            <person name="Teague B."/>
            <person name="Potamousis K."/>
            <person name="Churas C."/>
            <person name="Place M."/>
            <person name="Herschleb J."/>
            <person name="Runnheim R."/>
            <person name="Forrest D."/>
            <person name="Amos-Landgraf J."/>
            <person name="Schwartz D.C."/>
            <person name="Cheng Z."/>
            <person name="Lindblad-Toh K."/>
            <person name="Eichler E.E."/>
            <person name="Ponting C.P."/>
        </authorList>
    </citation>
    <scope>NUCLEOTIDE SEQUENCE [LARGE SCALE GENOMIC DNA]</scope>
    <source>
        <strain>C57BL/6J</strain>
    </source>
</reference>
<reference key="2">
    <citation type="journal article" date="1999" name="Physiol. Genomics">
        <title>Differential expression of putative transbilayer amphipath transporters.</title>
        <authorList>
            <person name="Halleck M.S."/>
            <person name="Lawler J.F. Jr."/>
            <person name="Blackshaw S."/>
            <person name="Gao L."/>
            <person name="Nagarajan P."/>
            <person name="Hacker C."/>
            <person name="Pyle S."/>
            <person name="Newman J.T."/>
            <person name="Nakanishi Y."/>
            <person name="Ando H."/>
            <person name="Weinstock D."/>
            <person name="Williamson P.L."/>
            <person name="Schlegel R.A."/>
        </authorList>
    </citation>
    <scope>NUCLEOTIDE SEQUENCE [MRNA] OF 863-1209</scope>
    <source>
        <strain>C57BL/6J</strain>
        <tissue>Embryo</tissue>
    </source>
</reference>
<reference key="3">
    <citation type="journal article" date="2018" name="Sci. Rep.">
        <title>Proteomic Analysis and Functional Characterization of P4-ATPase Phospholipid Flippases from Murine Tissues.</title>
        <authorList>
            <person name="Wang J."/>
            <person name="Molday L.L."/>
            <person name="Hii T."/>
            <person name="Coleman J.A."/>
            <person name="Wen T."/>
            <person name="Andersen J.P."/>
            <person name="Molday R.S."/>
        </authorList>
    </citation>
    <scope>IDENTIFICATION BY MASS SPECTROMETRY</scope>
    <scope>INTERACTION WITH TMEM30A</scope>
    <scope>TISSUE SPECIFICITY</scope>
</reference>
<dbReference type="EC" id="7.6.2.1" evidence="2"/>
<dbReference type="EMBL" id="AC163616">
    <property type="status" value="NOT_ANNOTATED_CDS"/>
    <property type="molecule type" value="Genomic_DNA"/>
</dbReference>
<dbReference type="EMBL" id="AF156546">
    <property type="protein sequence ID" value="AAF09444.1"/>
    <property type="molecule type" value="mRNA"/>
</dbReference>
<dbReference type="CCDS" id="CCDS89658.1"/>
<dbReference type="RefSeq" id="NP_001355579.1">
    <property type="nucleotide sequence ID" value="NM_001368650.2"/>
</dbReference>
<dbReference type="RefSeq" id="XP_006501777.1">
    <property type="nucleotide sequence ID" value="XM_006501714.3"/>
</dbReference>
<dbReference type="SMR" id="P98199"/>
<dbReference type="BioGRID" id="207713">
    <property type="interactions" value="1"/>
</dbReference>
<dbReference type="FunCoup" id="P98199">
    <property type="interactions" value="1526"/>
</dbReference>
<dbReference type="STRING" id="10090.ENSMUSP00000128423"/>
<dbReference type="GlyGen" id="P98199">
    <property type="glycosylation" value="1 site"/>
</dbReference>
<dbReference type="iPTMnet" id="P98199"/>
<dbReference type="PhosphoSitePlus" id="P98199"/>
<dbReference type="PaxDb" id="10090-ENSMUSP00000103019"/>
<dbReference type="ProteomicsDB" id="265135"/>
<dbReference type="Antibodypedia" id="34152">
    <property type="antibodies" value="90 antibodies from 15 providers"/>
</dbReference>
<dbReference type="Ensembl" id="ENSMUST00000069805.14">
    <property type="protein sequence ID" value="ENSMUSP00000063384.8"/>
    <property type="gene ID" value="ENSMUSG00000060671.13"/>
</dbReference>
<dbReference type="GeneID" id="54667"/>
<dbReference type="UCSC" id="uc008qah.1">
    <property type="organism name" value="mouse"/>
</dbReference>
<dbReference type="AGR" id="MGI:1859660"/>
<dbReference type="MGI" id="MGI:1859660">
    <property type="gene designation" value="Atp8b2"/>
</dbReference>
<dbReference type="VEuPathDB" id="HostDB:ENSMUSG00000060671"/>
<dbReference type="eggNOG" id="KOG0206">
    <property type="taxonomic scope" value="Eukaryota"/>
</dbReference>
<dbReference type="GeneTree" id="ENSGT00940000160804"/>
<dbReference type="HOGENOM" id="CLU_000846_5_2_1"/>
<dbReference type="InParanoid" id="P98199"/>
<dbReference type="BRENDA" id="7.6.2.1">
    <property type="organism ID" value="3474"/>
</dbReference>
<dbReference type="Reactome" id="R-MMU-936837">
    <property type="pathway name" value="Ion transport by P-type ATPases"/>
</dbReference>
<dbReference type="BioGRID-ORCS" id="54667">
    <property type="hits" value="2 hits in 76 CRISPR screens"/>
</dbReference>
<dbReference type="PRO" id="PR:P98199"/>
<dbReference type="Proteomes" id="UP000000589">
    <property type="component" value="Chromosome 3"/>
</dbReference>
<dbReference type="RNAct" id="P98199">
    <property type="molecule type" value="protein"/>
</dbReference>
<dbReference type="Bgee" id="ENSMUSG00000060671">
    <property type="expression patterns" value="Expressed in humerus cartilage element and 242 other cell types or tissues"/>
</dbReference>
<dbReference type="ExpressionAtlas" id="P98199">
    <property type="expression patterns" value="baseline and differential"/>
</dbReference>
<dbReference type="GO" id="GO:0005789">
    <property type="term" value="C:endoplasmic reticulum membrane"/>
    <property type="evidence" value="ECO:0007669"/>
    <property type="project" value="UniProtKB-SubCell"/>
</dbReference>
<dbReference type="GO" id="GO:0005886">
    <property type="term" value="C:plasma membrane"/>
    <property type="evidence" value="ECO:0007669"/>
    <property type="project" value="UniProtKB-SubCell"/>
</dbReference>
<dbReference type="GO" id="GO:0005524">
    <property type="term" value="F:ATP binding"/>
    <property type="evidence" value="ECO:0007669"/>
    <property type="project" value="UniProtKB-KW"/>
</dbReference>
<dbReference type="GO" id="GO:0016887">
    <property type="term" value="F:ATP hydrolysis activity"/>
    <property type="evidence" value="ECO:0007669"/>
    <property type="project" value="InterPro"/>
</dbReference>
<dbReference type="GO" id="GO:0000287">
    <property type="term" value="F:magnesium ion binding"/>
    <property type="evidence" value="ECO:0007669"/>
    <property type="project" value="InterPro"/>
</dbReference>
<dbReference type="GO" id="GO:0090554">
    <property type="term" value="F:phosphatidylcholine floppase activity"/>
    <property type="evidence" value="ECO:0007669"/>
    <property type="project" value="RHEA"/>
</dbReference>
<dbReference type="CDD" id="cd02073">
    <property type="entry name" value="P-type_ATPase_APLT_Dnf-like"/>
    <property type="match status" value="1"/>
</dbReference>
<dbReference type="FunFam" id="2.70.150.10:FF:000025">
    <property type="entry name" value="Phospholipid-transporting ATPase"/>
    <property type="match status" value="1"/>
</dbReference>
<dbReference type="FunFam" id="3.40.1110.10:FF:000188">
    <property type="entry name" value="Phospholipid-transporting ATPase"/>
    <property type="match status" value="1"/>
</dbReference>
<dbReference type="FunFam" id="3.40.50.1000:FF:000014">
    <property type="entry name" value="Phospholipid-transporting ATPase"/>
    <property type="match status" value="1"/>
</dbReference>
<dbReference type="FunFam" id="3.40.50.1000:FF:000001">
    <property type="entry name" value="Phospholipid-transporting ATPase IC"/>
    <property type="match status" value="1"/>
</dbReference>
<dbReference type="Gene3D" id="3.40.1110.10">
    <property type="entry name" value="Calcium-transporting ATPase, cytoplasmic domain N"/>
    <property type="match status" value="1"/>
</dbReference>
<dbReference type="Gene3D" id="2.70.150.10">
    <property type="entry name" value="Calcium-transporting ATPase, cytoplasmic transduction domain A"/>
    <property type="match status" value="1"/>
</dbReference>
<dbReference type="Gene3D" id="3.40.50.1000">
    <property type="entry name" value="HAD superfamily/HAD-like"/>
    <property type="match status" value="1"/>
</dbReference>
<dbReference type="InterPro" id="IPR023299">
    <property type="entry name" value="ATPase_P-typ_cyto_dom_N"/>
</dbReference>
<dbReference type="InterPro" id="IPR018303">
    <property type="entry name" value="ATPase_P-typ_P_site"/>
</dbReference>
<dbReference type="InterPro" id="IPR023298">
    <property type="entry name" value="ATPase_P-typ_TM_dom_sf"/>
</dbReference>
<dbReference type="InterPro" id="IPR008250">
    <property type="entry name" value="ATPase_P-typ_transduc_dom_A_sf"/>
</dbReference>
<dbReference type="InterPro" id="IPR036412">
    <property type="entry name" value="HAD-like_sf"/>
</dbReference>
<dbReference type="InterPro" id="IPR023214">
    <property type="entry name" value="HAD_sf"/>
</dbReference>
<dbReference type="InterPro" id="IPR006539">
    <property type="entry name" value="P-type_ATPase_IV"/>
</dbReference>
<dbReference type="InterPro" id="IPR032631">
    <property type="entry name" value="P-type_ATPase_N"/>
</dbReference>
<dbReference type="InterPro" id="IPR001757">
    <property type="entry name" value="P_typ_ATPase"/>
</dbReference>
<dbReference type="InterPro" id="IPR032630">
    <property type="entry name" value="P_typ_ATPase_c"/>
</dbReference>
<dbReference type="InterPro" id="IPR044492">
    <property type="entry name" value="P_typ_ATPase_HD_dom"/>
</dbReference>
<dbReference type="NCBIfam" id="TIGR01652">
    <property type="entry name" value="ATPase-Plipid"/>
    <property type="match status" value="1"/>
</dbReference>
<dbReference type="NCBIfam" id="TIGR01494">
    <property type="entry name" value="ATPase_P-type"/>
    <property type="match status" value="1"/>
</dbReference>
<dbReference type="PANTHER" id="PTHR24092:SF46">
    <property type="entry name" value="PHOSPHOLIPID-TRANSPORTING ATPASE ID"/>
    <property type="match status" value="1"/>
</dbReference>
<dbReference type="PANTHER" id="PTHR24092">
    <property type="entry name" value="PROBABLE PHOSPHOLIPID-TRANSPORTING ATPASE"/>
    <property type="match status" value="1"/>
</dbReference>
<dbReference type="Pfam" id="PF13246">
    <property type="entry name" value="Cation_ATPase"/>
    <property type="match status" value="1"/>
</dbReference>
<dbReference type="Pfam" id="PF16212">
    <property type="entry name" value="PhoLip_ATPase_C"/>
    <property type="match status" value="1"/>
</dbReference>
<dbReference type="Pfam" id="PF16209">
    <property type="entry name" value="PhoLip_ATPase_N"/>
    <property type="match status" value="1"/>
</dbReference>
<dbReference type="PRINTS" id="PR00119">
    <property type="entry name" value="CATATPASE"/>
</dbReference>
<dbReference type="SFLD" id="SFLDS00003">
    <property type="entry name" value="Haloacid_Dehalogenase"/>
    <property type="match status" value="1"/>
</dbReference>
<dbReference type="SFLD" id="SFLDF00027">
    <property type="entry name" value="p-type_atpase"/>
    <property type="match status" value="1"/>
</dbReference>
<dbReference type="SUPFAM" id="SSF81653">
    <property type="entry name" value="Calcium ATPase, transduction domain A"/>
    <property type="match status" value="1"/>
</dbReference>
<dbReference type="SUPFAM" id="SSF81665">
    <property type="entry name" value="Calcium ATPase, transmembrane domain M"/>
    <property type="match status" value="1"/>
</dbReference>
<dbReference type="SUPFAM" id="SSF56784">
    <property type="entry name" value="HAD-like"/>
    <property type="match status" value="1"/>
</dbReference>
<dbReference type="SUPFAM" id="SSF81660">
    <property type="entry name" value="Metal cation-transporting ATPase, ATP-binding domain N"/>
    <property type="match status" value="1"/>
</dbReference>
<dbReference type="PROSITE" id="PS00154">
    <property type="entry name" value="ATPASE_E1_E2"/>
    <property type="match status" value="1"/>
</dbReference>
<evidence type="ECO:0000250" key="1">
    <source>
        <dbReference type="UniProtKB" id="P04191"/>
    </source>
</evidence>
<evidence type="ECO:0000250" key="2">
    <source>
        <dbReference type="UniProtKB" id="P98198"/>
    </source>
</evidence>
<evidence type="ECO:0000250" key="3">
    <source>
        <dbReference type="UniProtKB" id="Q8NB49"/>
    </source>
</evidence>
<evidence type="ECO:0000250" key="4">
    <source>
        <dbReference type="UniProtKB" id="Q9HD20"/>
    </source>
</evidence>
<evidence type="ECO:0000250" key="5">
    <source>
        <dbReference type="UniProtKB" id="Q9Y2Q0"/>
    </source>
</evidence>
<evidence type="ECO:0000255" key="6"/>
<evidence type="ECO:0000256" key="7">
    <source>
        <dbReference type="SAM" id="MobiDB-lite"/>
    </source>
</evidence>
<evidence type="ECO:0000269" key="8">
    <source>
    </source>
</evidence>
<evidence type="ECO:0000303" key="9">
    <source>
    </source>
</evidence>
<evidence type="ECO:0000305" key="10"/>
<evidence type="ECO:0000312" key="11">
    <source>
        <dbReference type="MGI" id="MGI:1859660"/>
    </source>
</evidence>
<keyword id="KW-0067">ATP-binding</keyword>
<keyword id="KW-1003">Cell membrane</keyword>
<keyword id="KW-0256">Endoplasmic reticulum</keyword>
<keyword id="KW-0445">Lipid transport</keyword>
<keyword id="KW-0460">Magnesium</keyword>
<keyword id="KW-0472">Membrane</keyword>
<keyword id="KW-0479">Metal-binding</keyword>
<keyword id="KW-0547">Nucleotide-binding</keyword>
<keyword id="KW-0597">Phosphoprotein</keyword>
<keyword id="KW-1185">Reference proteome</keyword>
<keyword id="KW-1278">Translocase</keyword>
<keyword id="KW-0812">Transmembrane</keyword>
<keyword id="KW-1133">Transmembrane helix</keyword>
<keyword id="KW-0813">Transport</keyword>
<accession>P98199</accession>
<organism>
    <name type="scientific">Mus musculus</name>
    <name type="common">Mouse</name>
    <dbReference type="NCBI Taxonomy" id="10090"/>
    <lineage>
        <taxon>Eukaryota</taxon>
        <taxon>Metazoa</taxon>
        <taxon>Chordata</taxon>
        <taxon>Craniata</taxon>
        <taxon>Vertebrata</taxon>
        <taxon>Euteleostomi</taxon>
        <taxon>Mammalia</taxon>
        <taxon>Eutheria</taxon>
        <taxon>Euarchontoglires</taxon>
        <taxon>Glires</taxon>
        <taxon>Rodentia</taxon>
        <taxon>Myomorpha</taxon>
        <taxon>Muroidea</taxon>
        <taxon>Muridae</taxon>
        <taxon>Murinae</taxon>
        <taxon>Mus</taxon>
        <taxon>Mus</taxon>
    </lineage>
</organism>
<name>AT8B2_MOUSE</name>